<accession>A7ZD79</accession>
<comment type="function">
    <text evidence="1">Catalyzes the N-acylation of UDP-3-O-acylglucosamine using 3-hydroxyacyl-ACP as the acyl donor. Is involved in the biosynthesis of lipid A, a phosphorylated glycolipid that anchors the lipopolysaccharide to the outer membrane of the cell.</text>
</comment>
<comment type="catalytic activity">
    <reaction evidence="1">
        <text>a UDP-3-O-[(3R)-3-hydroxyacyl]-alpha-D-glucosamine + a (3R)-hydroxyacyl-[ACP] = a UDP-2-N,3-O-bis[(3R)-3-hydroxyacyl]-alpha-D-glucosamine + holo-[ACP] + H(+)</text>
        <dbReference type="Rhea" id="RHEA:53836"/>
        <dbReference type="Rhea" id="RHEA-COMP:9685"/>
        <dbReference type="Rhea" id="RHEA-COMP:9945"/>
        <dbReference type="ChEBI" id="CHEBI:15378"/>
        <dbReference type="ChEBI" id="CHEBI:64479"/>
        <dbReference type="ChEBI" id="CHEBI:78827"/>
        <dbReference type="ChEBI" id="CHEBI:137740"/>
        <dbReference type="ChEBI" id="CHEBI:137748"/>
        <dbReference type="EC" id="2.3.1.191"/>
    </reaction>
</comment>
<comment type="pathway">
    <text evidence="1">Bacterial outer membrane biogenesis; LPS lipid A biosynthesis.</text>
</comment>
<comment type="subunit">
    <text evidence="1">Homotrimer.</text>
</comment>
<comment type="similarity">
    <text evidence="1">Belongs to the transferase hexapeptide repeat family. LpxD subfamily.</text>
</comment>
<feature type="chain" id="PRO_1000050937" description="UDP-3-O-acylglucosamine N-acyltransferase">
    <location>
        <begin position="1"/>
        <end position="317"/>
    </location>
</feature>
<feature type="active site" description="Proton acceptor" evidence="1">
    <location>
        <position position="229"/>
    </location>
</feature>
<dbReference type="EC" id="2.3.1.191" evidence="1"/>
<dbReference type="EMBL" id="CP000792">
    <property type="protein sequence ID" value="EAT97514.1"/>
    <property type="molecule type" value="Genomic_DNA"/>
</dbReference>
<dbReference type="RefSeq" id="WP_012001678.1">
    <property type="nucleotide sequence ID" value="NC_009802.2"/>
</dbReference>
<dbReference type="SMR" id="A7ZD79"/>
<dbReference type="STRING" id="360104.CCC13826_0138"/>
<dbReference type="KEGG" id="cco:CCC13826_0138"/>
<dbReference type="eggNOG" id="COG1044">
    <property type="taxonomic scope" value="Bacteria"/>
</dbReference>
<dbReference type="HOGENOM" id="CLU_049865_0_1_7"/>
<dbReference type="OrthoDB" id="9784739at2"/>
<dbReference type="UniPathway" id="UPA00973"/>
<dbReference type="Proteomes" id="UP000001121">
    <property type="component" value="Chromosome"/>
</dbReference>
<dbReference type="GO" id="GO:0016020">
    <property type="term" value="C:membrane"/>
    <property type="evidence" value="ECO:0007669"/>
    <property type="project" value="GOC"/>
</dbReference>
<dbReference type="GO" id="GO:0016410">
    <property type="term" value="F:N-acyltransferase activity"/>
    <property type="evidence" value="ECO:0007669"/>
    <property type="project" value="InterPro"/>
</dbReference>
<dbReference type="GO" id="GO:0009245">
    <property type="term" value="P:lipid A biosynthetic process"/>
    <property type="evidence" value="ECO:0007669"/>
    <property type="project" value="UniProtKB-UniRule"/>
</dbReference>
<dbReference type="CDD" id="cd03352">
    <property type="entry name" value="LbH_LpxD"/>
    <property type="match status" value="1"/>
</dbReference>
<dbReference type="Gene3D" id="2.160.10.10">
    <property type="entry name" value="Hexapeptide repeat proteins"/>
    <property type="match status" value="1"/>
</dbReference>
<dbReference type="Gene3D" id="3.40.1390.10">
    <property type="entry name" value="MurE/MurF, N-terminal domain"/>
    <property type="match status" value="1"/>
</dbReference>
<dbReference type="HAMAP" id="MF_00523">
    <property type="entry name" value="LpxD"/>
    <property type="match status" value="1"/>
</dbReference>
<dbReference type="InterPro" id="IPR001451">
    <property type="entry name" value="Hexapep"/>
</dbReference>
<dbReference type="InterPro" id="IPR007691">
    <property type="entry name" value="LpxD"/>
</dbReference>
<dbReference type="InterPro" id="IPR011004">
    <property type="entry name" value="Trimer_LpxA-like_sf"/>
</dbReference>
<dbReference type="InterPro" id="IPR020573">
    <property type="entry name" value="UDP_GlcNAc_AcTrfase_non-rep"/>
</dbReference>
<dbReference type="NCBIfam" id="TIGR01853">
    <property type="entry name" value="lipid_A_lpxD"/>
    <property type="match status" value="1"/>
</dbReference>
<dbReference type="NCBIfam" id="NF002060">
    <property type="entry name" value="PRK00892.1"/>
    <property type="match status" value="1"/>
</dbReference>
<dbReference type="PANTHER" id="PTHR43378">
    <property type="entry name" value="UDP-3-O-ACYLGLUCOSAMINE N-ACYLTRANSFERASE"/>
    <property type="match status" value="1"/>
</dbReference>
<dbReference type="PANTHER" id="PTHR43378:SF2">
    <property type="entry name" value="UDP-3-O-ACYLGLUCOSAMINE N-ACYLTRANSFERASE 1, MITOCHONDRIAL-RELATED"/>
    <property type="match status" value="1"/>
</dbReference>
<dbReference type="Pfam" id="PF00132">
    <property type="entry name" value="Hexapep"/>
    <property type="match status" value="2"/>
</dbReference>
<dbReference type="Pfam" id="PF04613">
    <property type="entry name" value="LpxD"/>
    <property type="match status" value="1"/>
</dbReference>
<dbReference type="SUPFAM" id="SSF51161">
    <property type="entry name" value="Trimeric LpxA-like enzymes"/>
    <property type="match status" value="1"/>
</dbReference>
<reference key="1">
    <citation type="submission" date="2007-10" db="EMBL/GenBank/DDBJ databases">
        <title>Genome sequence of Campylobacter concisus 13826 isolated from human feces.</title>
        <authorList>
            <person name="Fouts D.E."/>
            <person name="Mongodin E.F."/>
            <person name="Puiu D."/>
            <person name="Sebastian Y."/>
            <person name="Miller W.G."/>
            <person name="Mandrell R.E."/>
            <person name="On S."/>
            <person name="Nelson K.E."/>
        </authorList>
    </citation>
    <scope>NUCLEOTIDE SEQUENCE [LARGE SCALE GENOMIC DNA]</scope>
    <source>
        <strain>13826</strain>
    </source>
</reference>
<sequence>MKLSEIALKVDATFSGEDLEIFALNSLKNANKAELTYCDGEKNAKFISTSNAGAILVTKSLLDLVPAGMVALVCDNPHLAFAILSKIYAKPLFCEPKPSNIAQSATIMPNVYIGSNVSVGENTIVMAGAFLGDNVTIGKNCIIHPNVVIYNDCVIGNECHLLANCVIGSDGFGYAHTKTGEHVKIYHNGNVVLGDFVEIGACTTIDRGVFESTMIANYTKIDNLVQIGHNCELGNGCLIVSQTGLAGSTVLGRNVVMGGQSGSAGHVKVGDFAQIAARGGVSKDLPGGKKYAGAYPIMELSEQFKFQAKILRFFKKN</sequence>
<gene>
    <name evidence="1" type="primary">lpxD</name>
    <name type="ordered locus">Ccon26_08690</name>
    <name type="ORF">CCC13826_0138</name>
</gene>
<keyword id="KW-0012">Acyltransferase</keyword>
<keyword id="KW-0441">Lipid A biosynthesis</keyword>
<keyword id="KW-0444">Lipid biosynthesis</keyword>
<keyword id="KW-0443">Lipid metabolism</keyword>
<keyword id="KW-0677">Repeat</keyword>
<keyword id="KW-0808">Transferase</keyword>
<name>LPXD_CAMC1</name>
<organism>
    <name type="scientific">Campylobacter concisus (strain 13826)</name>
    <dbReference type="NCBI Taxonomy" id="360104"/>
    <lineage>
        <taxon>Bacteria</taxon>
        <taxon>Pseudomonadati</taxon>
        <taxon>Campylobacterota</taxon>
        <taxon>Epsilonproteobacteria</taxon>
        <taxon>Campylobacterales</taxon>
        <taxon>Campylobacteraceae</taxon>
        <taxon>Campylobacter</taxon>
    </lineage>
</organism>
<evidence type="ECO:0000255" key="1">
    <source>
        <dbReference type="HAMAP-Rule" id="MF_00523"/>
    </source>
</evidence>
<protein>
    <recommendedName>
        <fullName evidence="1">UDP-3-O-acylglucosamine N-acyltransferase</fullName>
        <ecNumber evidence="1">2.3.1.191</ecNumber>
    </recommendedName>
</protein>
<proteinExistence type="inferred from homology"/>